<reference key="1">
    <citation type="submission" date="1997-04" db="EMBL/GenBank/DDBJ databases">
        <authorList>
            <person name="Kim H.K."/>
            <person name="Min K.H."/>
            <person name="Yamane K."/>
        </authorList>
    </citation>
    <scope>NUCLEOTIDE SEQUENCE [GENOMIC DNA]</scope>
</reference>
<sequence length="229" mass="24779">MSSLFQTYGRWDIDIKKAKGTYVEDQNGKTYLDFIQGIAVSNLGHCHEAVTEAVKKQLDSVWHVSNLFQNSLQEQAAQKLAAHSAGDLVFFCNSGAEANEGAIKLARKATGKTKIITFLQSFHGRTYAGMAATGQDKIKTGFGPMLGGFHYLPYNDPSAFKALGEEGDIAAVMLETVQGEGGVNPASAEFLSAVQSFCKEKQALLIIDEIQTGIGRTGTRFAYQHFGLS</sequence>
<name>ARGD_BACAM</name>
<protein>
    <recommendedName>
        <fullName>Acetylornithine aminotransferase</fullName>
        <shortName>ACOAT</shortName>
        <ecNumber>2.6.1.11</ecNumber>
    </recommendedName>
</protein>
<gene>
    <name type="primary">argD</name>
</gene>
<accession>Q9ZJ10</accession>
<organism>
    <name type="scientific">Bacillus amyloliquefaciens</name>
    <name type="common">Bacillus velezensis</name>
    <dbReference type="NCBI Taxonomy" id="1390"/>
    <lineage>
        <taxon>Bacteria</taxon>
        <taxon>Bacillati</taxon>
        <taxon>Bacillota</taxon>
        <taxon>Bacilli</taxon>
        <taxon>Bacillales</taxon>
        <taxon>Bacillaceae</taxon>
        <taxon>Bacillus</taxon>
        <taxon>Bacillus amyloliquefaciens group</taxon>
    </lineage>
</organism>
<keyword id="KW-0028">Amino-acid biosynthesis</keyword>
<keyword id="KW-0032">Aminotransferase</keyword>
<keyword id="KW-0055">Arginine biosynthesis</keyword>
<keyword id="KW-0963">Cytoplasm</keyword>
<keyword id="KW-0663">Pyridoxal phosphate</keyword>
<keyword id="KW-0808">Transferase</keyword>
<dbReference type="EC" id="2.6.1.11"/>
<dbReference type="EMBL" id="AF001833">
    <property type="protein sequence ID" value="AAD00908.1"/>
    <property type="molecule type" value="Genomic_DNA"/>
</dbReference>
<dbReference type="SMR" id="Q9ZJ10"/>
<dbReference type="STRING" id="692420.BAMF_1195"/>
<dbReference type="UniPathway" id="UPA00068">
    <property type="reaction ID" value="UER00109"/>
</dbReference>
<dbReference type="GO" id="GO:0005737">
    <property type="term" value="C:cytoplasm"/>
    <property type="evidence" value="ECO:0007669"/>
    <property type="project" value="UniProtKB-SubCell"/>
</dbReference>
<dbReference type="GO" id="GO:0042802">
    <property type="term" value="F:identical protein binding"/>
    <property type="evidence" value="ECO:0007669"/>
    <property type="project" value="TreeGrafter"/>
</dbReference>
<dbReference type="GO" id="GO:0003992">
    <property type="term" value="F:N2-acetyl-L-ornithine:2-oxoglutarate 5-aminotransferase activity"/>
    <property type="evidence" value="ECO:0007669"/>
    <property type="project" value="UniProtKB-EC"/>
</dbReference>
<dbReference type="GO" id="GO:0030170">
    <property type="term" value="F:pyridoxal phosphate binding"/>
    <property type="evidence" value="ECO:0007669"/>
    <property type="project" value="InterPro"/>
</dbReference>
<dbReference type="GO" id="GO:0006526">
    <property type="term" value="P:L-arginine biosynthetic process"/>
    <property type="evidence" value="ECO:0007669"/>
    <property type="project" value="UniProtKB-UniPathway"/>
</dbReference>
<dbReference type="CDD" id="cd00610">
    <property type="entry name" value="OAT_like"/>
    <property type="match status" value="1"/>
</dbReference>
<dbReference type="FunFam" id="3.40.640.10:FF:000004">
    <property type="entry name" value="Acetylornithine aminotransferase"/>
    <property type="match status" value="1"/>
</dbReference>
<dbReference type="Gene3D" id="3.90.1150.10">
    <property type="entry name" value="Aspartate Aminotransferase, domain 1"/>
    <property type="match status" value="1"/>
</dbReference>
<dbReference type="Gene3D" id="3.40.640.10">
    <property type="entry name" value="Type I PLP-dependent aspartate aminotransferase-like (Major domain)"/>
    <property type="match status" value="1"/>
</dbReference>
<dbReference type="InterPro" id="IPR005814">
    <property type="entry name" value="Aminotrans_3"/>
</dbReference>
<dbReference type="InterPro" id="IPR050103">
    <property type="entry name" value="Class-III_PLP-dep_AT"/>
</dbReference>
<dbReference type="InterPro" id="IPR015424">
    <property type="entry name" value="PyrdxlP-dep_Trfase"/>
</dbReference>
<dbReference type="InterPro" id="IPR015421">
    <property type="entry name" value="PyrdxlP-dep_Trfase_major"/>
</dbReference>
<dbReference type="InterPro" id="IPR015422">
    <property type="entry name" value="PyrdxlP-dep_Trfase_small"/>
</dbReference>
<dbReference type="PANTHER" id="PTHR11986:SF79">
    <property type="entry name" value="ACETYLORNITHINE AMINOTRANSFERASE, MITOCHONDRIAL"/>
    <property type="match status" value="1"/>
</dbReference>
<dbReference type="PANTHER" id="PTHR11986">
    <property type="entry name" value="AMINOTRANSFERASE CLASS III"/>
    <property type="match status" value="1"/>
</dbReference>
<dbReference type="Pfam" id="PF00202">
    <property type="entry name" value="Aminotran_3"/>
    <property type="match status" value="1"/>
</dbReference>
<dbReference type="SUPFAM" id="SSF53383">
    <property type="entry name" value="PLP-dependent transferases"/>
    <property type="match status" value="1"/>
</dbReference>
<comment type="catalytic activity">
    <reaction evidence="1">
        <text>N(2)-acetyl-L-ornithine + 2-oxoglutarate = N-acetyl-L-glutamate 5-semialdehyde + L-glutamate</text>
        <dbReference type="Rhea" id="RHEA:18049"/>
        <dbReference type="ChEBI" id="CHEBI:16810"/>
        <dbReference type="ChEBI" id="CHEBI:29123"/>
        <dbReference type="ChEBI" id="CHEBI:29985"/>
        <dbReference type="ChEBI" id="CHEBI:57805"/>
        <dbReference type="EC" id="2.6.1.11"/>
    </reaction>
</comment>
<comment type="cofactor">
    <cofactor evidence="1">
        <name>pyridoxal 5'-phosphate</name>
        <dbReference type="ChEBI" id="CHEBI:597326"/>
    </cofactor>
    <text evidence="1">Binds 1 pyridoxal phosphate per subunit.</text>
</comment>
<comment type="pathway">
    <text evidence="1">Amino-acid biosynthesis; L-arginine biosynthesis; N(2)-acetyl-L-ornithine from L-glutamate: step 4/4.</text>
</comment>
<comment type="subunit">
    <text evidence="1">Homodimer.</text>
</comment>
<comment type="subcellular location">
    <subcellularLocation>
        <location evidence="1">Cytoplasm</location>
    </subcellularLocation>
</comment>
<comment type="miscellaneous">
    <text evidence="1">May also have succinyldiaminopimelate aminotransferase activity, thus carrying out the fourth step in lysine biosynthesis.</text>
</comment>
<comment type="similarity">
    <text evidence="2">Belongs to the class-III pyridoxal-phosphate-dependent aminotransferase family. ArgD subfamily.</text>
</comment>
<feature type="chain" id="PRO_0000112718" description="Acetylornithine aminotransferase">
    <location>
        <begin position="1"/>
        <end position="229" status="greater than"/>
    </location>
</feature>
<feature type="binding site" evidence="1">
    <location>
        <begin position="95"/>
        <end position="96"/>
    </location>
    <ligand>
        <name>pyridoxal 5'-phosphate</name>
        <dbReference type="ChEBI" id="CHEBI:597326"/>
    </ligand>
</feature>
<feature type="binding site" evidence="1">
    <location>
        <position position="122"/>
    </location>
    <ligand>
        <name>pyridoxal 5'-phosphate</name>
        <dbReference type="ChEBI" id="CHEBI:597326"/>
    </ligand>
</feature>
<feature type="binding site" evidence="1">
    <location>
        <position position="125"/>
    </location>
    <ligand>
        <name>N(2)-acetyl-L-ornithine</name>
        <dbReference type="ChEBI" id="CHEBI:57805"/>
    </ligand>
</feature>
<feature type="binding site" evidence="1">
    <location>
        <begin position="208"/>
        <end position="211"/>
    </location>
    <ligand>
        <name>pyridoxal 5'-phosphate</name>
        <dbReference type="ChEBI" id="CHEBI:597326"/>
    </ligand>
</feature>
<feature type="non-terminal residue">
    <location>
        <position position="229"/>
    </location>
</feature>
<proteinExistence type="inferred from homology"/>
<evidence type="ECO:0000250" key="1"/>
<evidence type="ECO:0000305" key="2"/>